<protein>
    <recommendedName>
        <fullName>Synaptic vesicular amine transporter</fullName>
    </recommendedName>
    <alternativeName>
        <fullName>Solute carrier family 18 member 2</fullName>
    </alternativeName>
    <alternativeName>
        <fullName>Vesicular amine transporter 2</fullName>
        <shortName>VAT2</shortName>
    </alternativeName>
    <alternativeName>
        <fullName evidence="12 13 14">Vesicular monoamine transporter 2</fullName>
    </alternativeName>
</protein>
<evidence type="ECO:0000250" key="1">
    <source>
        <dbReference type="UniProtKB" id="Q01827"/>
    </source>
</evidence>
<evidence type="ECO:0000250" key="2">
    <source>
        <dbReference type="UniProtKB" id="Q8BRU6"/>
    </source>
</evidence>
<evidence type="ECO:0000255" key="3"/>
<evidence type="ECO:0000269" key="4">
    <source>
    </source>
</evidence>
<evidence type="ECO:0000269" key="5">
    <source>
    </source>
</evidence>
<evidence type="ECO:0000269" key="6">
    <source>
    </source>
</evidence>
<evidence type="ECO:0000269" key="7">
    <source>
    </source>
</evidence>
<evidence type="ECO:0000269" key="8">
    <source>
    </source>
</evidence>
<evidence type="ECO:0000269" key="9">
    <source>
    </source>
</evidence>
<evidence type="ECO:0000269" key="10">
    <source>
    </source>
</evidence>
<evidence type="ECO:0000303" key="11">
    <source>
    </source>
</evidence>
<evidence type="ECO:0000303" key="12">
    <source>
    </source>
</evidence>
<evidence type="ECO:0000303" key="13">
    <source>
    </source>
</evidence>
<evidence type="ECO:0000303" key="14">
    <source>
    </source>
</evidence>
<evidence type="ECO:0000305" key="15"/>
<evidence type="ECO:0000305" key="16">
    <source>
    </source>
</evidence>
<evidence type="ECO:0000305" key="17">
    <source>
    </source>
</evidence>
<evidence type="ECO:0000305" key="18">
    <source>
    </source>
</evidence>
<evidence type="ECO:0007744" key="19">
    <source>
        <dbReference type="PDB" id="8JSW"/>
    </source>
</evidence>
<evidence type="ECO:0007744" key="20">
    <source>
        <dbReference type="PDB" id="8JT9"/>
    </source>
</evidence>
<evidence type="ECO:0007744" key="21">
    <source>
        <dbReference type="PDB" id="8JTA"/>
    </source>
</evidence>
<evidence type="ECO:0007744" key="22">
    <source>
        <dbReference type="PDB" id="8JTC"/>
    </source>
</evidence>
<evidence type="ECO:0007744" key="23">
    <source>
        <dbReference type="PDB" id="8T69"/>
    </source>
</evidence>
<evidence type="ECO:0007744" key="24">
    <source>
        <dbReference type="PDB" id="8T6A"/>
    </source>
</evidence>
<evidence type="ECO:0007744" key="25">
    <source>
        <dbReference type="PDB" id="8T6B"/>
    </source>
</evidence>
<evidence type="ECO:0007744" key="26">
    <source>
        <dbReference type="PDB" id="8THR"/>
    </source>
</evidence>
<evidence type="ECO:0007829" key="27">
    <source>
        <dbReference type="PDB" id="8JSW"/>
    </source>
</evidence>
<evidence type="ECO:0007829" key="28">
    <source>
        <dbReference type="PDB" id="8THR"/>
    </source>
</evidence>
<evidence type="ECO:0007829" key="29">
    <source>
        <dbReference type="PDB" id="8WRE"/>
    </source>
</evidence>
<name>VMAT2_HUMAN</name>
<organism>
    <name type="scientific">Homo sapiens</name>
    <name type="common">Human</name>
    <dbReference type="NCBI Taxonomy" id="9606"/>
    <lineage>
        <taxon>Eukaryota</taxon>
        <taxon>Metazoa</taxon>
        <taxon>Chordata</taxon>
        <taxon>Craniata</taxon>
        <taxon>Vertebrata</taxon>
        <taxon>Euteleostomi</taxon>
        <taxon>Mammalia</taxon>
        <taxon>Eutheria</taxon>
        <taxon>Euarchontoglires</taxon>
        <taxon>Primates</taxon>
        <taxon>Haplorrhini</taxon>
        <taxon>Catarrhini</taxon>
        <taxon>Hominidae</taxon>
        <taxon>Homo</taxon>
    </lineage>
</organism>
<comment type="function">
    <text evidence="1 2 5 6 7 8 9 10">Electrogenic antiporter that exchanges one cationic monoamine with two intravesicular protons across the membrane of secretory and synaptic vesicles. Uses the electrochemical proton gradient established by the V-type proton-pump ATPase to accumulate high concentrations of monoamines inside the vesicles prior to their release via exocytosis. Transports a variety of catecholamines such as dopamine, adrenaline and noradrenaline, histamine, and indolamines such as serotonin (PubMed:23363473, PubMed:37914936, PubMed:38081299, PubMed:38517752, PubMed:8643547). Regulates the transvesicular monoaminergic gradient that determines the quantal size. Mediates somatodendritic dopamine release in hippocampal neurons, likely as part of a regulated secretory pathway that integrates retrograde synaptic signals (By similarity). Acts as a primary transporter for striatal dopamine loading ensuring impulse-dependent release of dopamine at the synaptic cleft (By similarity). Responsible for histamine and serotonin storage and subsequent corelease from mast cell granules (PubMed:8860238).</text>
</comment>
<comment type="catalytic activity">
    <reaction evidence="5 7 8 9">
        <text>serotonin(in) + 2 H(+)(out) = serotonin(out) + 2 H(+)(in)</text>
        <dbReference type="Rhea" id="RHEA:73743"/>
        <dbReference type="ChEBI" id="CHEBI:15378"/>
        <dbReference type="ChEBI" id="CHEBI:350546"/>
    </reaction>
    <physiologicalReaction direction="left-to-right" evidence="16">
        <dbReference type="Rhea" id="RHEA:73744"/>
    </physiologicalReaction>
</comment>
<comment type="catalytic activity">
    <reaction evidence="6">
        <text>dopamine(in) + 2 H(+)(out) = dopamine(out) + 2 H(+)(in)</text>
        <dbReference type="Rhea" id="RHEA:73739"/>
        <dbReference type="ChEBI" id="CHEBI:15378"/>
        <dbReference type="ChEBI" id="CHEBI:59905"/>
    </reaction>
    <physiologicalReaction direction="left-to-right" evidence="17">
        <dbReference type="Rhea" id="RHEA:73740"/>
    </physiologicalReaction>
</comment>
<comment type="catalytic activity">
    <reaction evidence="10">
        <text>histamine(in) + 2 H(+)(out) = histamine(out) + 2 H(+)(in)</text>
        <dbReference type="Rhea" id="RHEA:73755"/>
        <dbReference type="ChEBI" id="CHEBI:15378"/>
        <dbReference type="ChEBI" id="CHEBI:58432"/>
    </reaction>
    <physiologicalReaction direction="left-to-right" evidence="18">
        <dbReference type="Rhea" id="RHEA:73756"/>
    </physiologicalReaction>
</comment>
<comment type="activity regulation">
    <text evidence="6 7 8 9 10">Strongly inhibited by reserpine and tetrabenazine (PubMed:37914936, PubMed:38081299, PubMed:38517752, PubMed:8643547, PubMed:8860238). Also inhibited to a lesser extent by ketanserin and fenfluramine (PubMed:38081299). Reserpine and ketanserin inhibit by blocking the substrate-binding pocket (PubMed:37914936, PubMed:38081299). Tetrabenazine traps SLC18A2/VMAT2 in an occluded conformation and its inhibition is specific to SLC18A2/VMAT2 but not SLC18A1/VMAT1 (PubMed:37914936, PubMed:38081299, PubMed:38517752).</text>
</comment>
<comment type="biophysicochemical properties">
    <kinetics>
        <KM evidence="9">0.8 uM for serotonin</KM>
        <KM evidence="10">300 uM for histamine</KM>
    </kinetics>
</comment>
<comment type="subunit">
    <text evidence="2">Interacts with SLC6A3.</text>
</comment>
<comment type="interaction">
    <interactant intactId="EBI-18036244">
        <id>Q05940</id>
    </interactant>
    <interactant intactId="EBI-12244618">
        <id>Q6PL45-2</id>
        <label>BRICD5</label>
    </interactant>
    <organismsDiffer>false</organismsDiffer>
    <experiments>3</experiments>
</comment>
<comment type="interaction">
    <interactant intactId="EBI-18036244">
        <id>Q05940</id>
    </interactant>
    <interactant intactId="EBI-11579371">
        <id>Q9BXR6</id>
        <label>CFHR5</label>
    </interactant>
    <organismsDiffer>false</organismsDiffer>
    <experiments>3</experiments>
</comment>
<comment type="interaction">
    <interactant intactId="EBI-18036244">
        <id>Q05940</id>
    </interactant>
    <interactant intactId="EBI-11522780">
        <id>Q96DZ9-2</id>
        <label>CMTM5</label>
    </interactant>
    <organismsDiffer>false</organismsDiffer>
    <experiments>3</experiments>
</comment>
<comment type="interaction">
    <interactant intactId="EBI-18036244">
        <id>Q05940</id>
    </interactant>
    <interactant intactId="EBI-2835281">
        <id>P25025</id>
        <label>CXCR2</label>
    </interactant>
    <organismsDiffer>false</organismsDiffer>
    <experiments>3</experiments>
</comment>
<comment type="interaction">
    <interactant intactId="EBI-18036244">
        <id>Q05940</id>
    </interactant>
    <interactant intactId="EBI-11955647">
        <id>Q8TDV0</id>
        <label>GPR151</label>
    </interactant>
    <organismsDiffer>false</organismsDiffer>
    <experiments>3</experiments>
</comment>
<comment type="interaction">
    <interactant intactId="EBI-18036244">
        <id>Q05940</id>
    </interactant>
    <interactant intactId="EBI-3920969">
        <id>Q6N075</id>
        <label>MFSD5</label>
    </interactant>
    <organismsDiffer>false</organismsDiffer>
    <experiments>3</experiments>
</comment>
<comment type="interaction">
    <interactant intactId="EBI-18036244">
        <id>Q05940</id>
    </interactant>
    <interactant intactId="EBI-3919611">
        <id>Q16617</id>
        <label>NKG7</label>
    </interactant>
    <organismsDiffer>false</organismsDiffer>
    <experiments>3</experiments>
</comment>
<comment type="interaction">
    <interactant intactId="EBI-18036244">
        <id>Q05940</id>
    </interactant>
    <interactant intactId="EBI-4289564">
        <id>P30825</id>
        <label>SLC7A1</label>
    </interactant>
    <organismsDiffer>false</organismsDiffer>
    <experiments>3</experiments>
</comment>
<comment type="interaction">
    <interactant intactId="EBI-18036244">
        <id>Q05940</id>
    </interactant>
    <interactant intactId="EBI-1057733">
        <id>Q9BVC6</id>
        <label>TMEM109</label>
    </interactant>
    <organismsDiffer>false</organismsDiffer>
    <experiments>3</experiments>
</comment>
<comment type="interaction">
    <interactant intactId="EBI-18036244">
        <id>Q05940</id>
    </interactant>
    <interactant intactId="EBI-10826510">
        <id>Q96B49</id>
        <label>TOMM6</label>
    </interactant>
    <organismsDiffer>false</organismsDiffer>
    <experiments>3</experiments>
</comment>
<comment type="subcellular location">
    <subcellularLocation>
        <location evidence="1">Cytoplasmic vesicle</location>
        <location evidence="1">Secretory vesicle</location>
        <location evidence="1">Synaptic vesicle membrane</location>
        <topology evidence="3">Multi-pass membrane protein</topology>
    </subcellularLocation>
    <subcellularLocation>
        <location evidence="1">Cytoplasmic vesicle</location>
        <location evidence="1">Secretory vesicle membrane</location>
        <topology evidence="3">Multi-pass membrane protein</topology>
    </subcellularLocation>
    <subcellularLocation>
        <location evidence="1">Cell projection</location>
        <location evidence="1">Axon</location>
    </subcellularLocation>
    <subcellularLocation>
        <location evidence="1">Cell projection</location>
        <location evidence="1">Dendrite</location>
    </subcellularLocation>
    <text evidence="1">Sorted to large dense core granules in neuroendocrine cells, presumably at the level of the trans-Golgi network. In neurons it is predominantly detected in somatodendritic tubulovesicular membranes, a distinct population of secretory vesicles that undergo calcium-dependent exocytosis in axons and dendrites upon depolarization. Localized at synaptic vesicles in axons.</text>
</comment>
<comment type="alternative products">
    <event type="alternative splicing"/>
    <isoform>
        <id>Q05940-1</id>
        <name>1</name>
        <sequence type="displayed"/>
    </isoform>
    <isoform>
        <id>Q05940-2</id>
        <name>2</name>
        <sequence type="described" ref="VSP_057151 VSP_057152"/>
    </isoform>
</comment>
<comment type="tissue specificity">
    <text evidence="9 10">Expressed in neuronal and neuroendocrine tissues. Detected in central and peripheral nervous system in particular in axonal and dendritic processes in dopaminergic cells of substantia nigra, histaminergic neuronal cell bodies of substantia nigra and tuberomammillary nucleus, in ganglion cells of sympathetic glia and in peripheral sympathetic nerve terminals in stomach and duodenum (at protein level). Highly expressed in chromaffin cells of the adrenal medulla and histamine-storing enterochromaffin-like cells of oxyntic mucosa (at protein level).</text>
</comment>
<comment type="disease" evidence="5">
    <disease id="DI-05288">
        <name>Parkinsonism-dystonia 2, infantile-onset</name>
        <acronym>PKDYS2</acronym>
        <description>An autosomal recessive disorder characterized by infantile onset of abnormal movements, including parkinsonism, dystonia, and poor fine motor skills, as well as autonomic dysfunction, including abnormal sweating, cold extremities, and poor sleep. Some patients have variable degrees of developmental delay.</description>
        <dbReference type="MIM" id="618049"/>
    </disease>
    <text>The disease is caused by variants affecting the gene represented in this entry.</text>
</comment>
<comment type="similarity">
    <text evidence="15">Belongs to the major facilitator superfamily. Vesicular transporter family.</text>
</comment>
<comment type="sequence caution" evidence="15">
    <conflict type="erroneous gene model prediction">
        <sequence resource="EMBL-CDS" id="BAB19009"/>
    </conflict>
</comment>
<comment type="online information" name="Wikipedia">
    <link uri="https://en.wikipedia.org/wiki/Vesicular_monoamine_transporter"/>
    <text>Vesicular monoamine transporter entry</text>
</comment>
<keyword id="KW-0002">3D-structure</keyword>
<keyword id="KW-0025">Alternative splicing</keyword>
<keyword id="KW-0966">Cell projection</keyword>
<keyword id="KW-0968">Cytoplasmic vesicle</keyword>
<keyword id="KW-0225">Disease variant</keyword>
<keyword id="KW-1015">Disulfide bond</keyword>
<keyword id="KW-1023">Dystonia</keyword>
<keyword id="KW-0325">Glycoprotein</keyword>
<keyword id="KW-0472">Membrane</keyword>
<keyword id="KW-0532">Neurotransmitter transport</keyword>
<keyword id="KW-0908">Parkinsonism</keyword>
<keyword id="KW-0597">Phosphoprotein</keyword>
<keyword id="KW-1267">Proteomics identification</keyword>
<keyword id="KW-1185">Reference proteome</keyword>
<keyword id="KW-0770">Synapse</keyword>
<keyword id="KW-0812">Transmembrane</keyword>
<keyword id="KW-1133">Transmembrane helix</keyword>
<keyword id="KW-0813">Transport</keyword>
<dbReference type="EMBL" id="L09118">
    <property type="protein sequence ID" value="AAA59877.1"/>
    <property type="molecule type" value="mRNA"/>
</dbReference>
<dbReference type="EMBL" id="L23205">
    <property type="protein sequence ID" value="AAA61290.1"/>
    <property type="molecule type" value="mRNA"/>
</dbReference>
<dbReference type="EMBL" id="L14269">
    <property type="protein sequence ID" value="AAA91853.1"/>
    <property type="molecule type" value="mRNA"/>
</dbReference>
<dbReference type="EMBL" id="X71354">
    <property type="protein sequence ID" value="CAA50489.1"/>
    <property type="molecule type" value="mRNA"/>
</dbReference>
<dbReference type="EMBL" id="AB044401">
    <property type="protein sequence ID" value="BAB19009.1"/>
    <property type="status" value="ALT_SEQ"/>
    <property type="molecule type" value="Genomic_DNA"/>
</dbReference>
<dbReference type="EMBL" id="AK314997">
    <property type="protein sequence ID" value="BAG37493.1"/>
    <property type="molecule type" value="mRNA"/>
</dbReference>
<dbReference type="EMBL" id="AL391988">
    <property type="status" value="NOT_ANNOTATED_CDS"/>
    <property type="molecule type" value="Genomic_DNA"/>
</dbReference>
<dbReference type="EMBL" id="AL731557">
    <property type="status" value="NOT_ANNOTATED_CDS"/>
    <property type="molecule type" value="Genomic_DNA"/>
</dbReference>
<dbReference type="EMBL" id="CH471066">
    <property type="protein sequence ID" value="EAW49428.1"/>
    <property type="molecule type" value="Genomic_DNA"/>
</dbReference>
<dbReference type="EMBL" id="CH471066">
    <property type="protein sequence ID" value="EAW49429.1"/>
    <property type="molecule type" value="Genomic_DNA"/>
</dbReference>
<dbReference type="EMBL" id="BC030593">
    <property type="protein sequence ID" value="AAH30593.1"/>
    <property type="molecule type" value="mRNA"/>
</dbReference>
<dbReference type="EMBL" id="BC108927">
    <property type="protein sequence ID" value="AAI08928.1"/>
    <property type="molecule type" value="mRNA"/>
</dbReference>
<dbReference type="EMBL" id="BC108928">
    <property type="protein sequence ID" value="AAI08929.1"/>
    <property type="molecule type" value="mRNA"/>
</dbReference>
<dbReference type="CCDS" id="CCDS7599.1">
    <molecule id="Q05940-1"/>
</dbReference>
<dbReference type="PIR" id="A49368">
    <property type="entry name" value="A49368"/>
</dbReference>
<dbReference type="PIR" id="S29810">
    <property type="entry name" value="S29810"/>
</dbReference>
<dbReference type="RefSeq" id="NP_003045.2">
    <molecule id="Q05940-1"/>
    <property type="nucleotide sequence ID" value="NM_003054.4"/>
</dbReference>
<dbReference type="PDB" id="8JSW">
    <property type="method" value="EM"/>
    <property type="resolution" value="2.84 A"/>
    <property type="chains" value="A=18-474"/>
</dbReference>
<dbReference type="PDB" id="8JSX">
    <property type="method" value="EM"/>
    <property type="resolution" value="3.16 A"/>
    <property type="chains" value="A=18-474"/>
</dbReference>
<dbReference type="PDB" id="8JT5">
    <property type="method" value="EM"/>
    <property type="resolution" value="3.06 A"/>
    <property type="chains" value="A=18-474"/>
</dbReference>
<dbReference type="PDB" id="8JT9">
    <property type="method" value="EM"/>
    <property type="resolution" value="2.97 A"/>
    <property type="chains" value="A=18-474"/>
</dbReference>
<dbReference type="PDB" id="8JTA">
    <property type="method" value="EM"/>
    <property type="resolution" value="3.36 A"/>
    <property type="chains" value="A=18-474"/>
</dbReference>
<dbReference type="PDB" id="8JTB">
    <property type="method" value="EM"/>
    <property type="resolution" value="2.93 A"/>
    <property type="chains" value="A=18-474"/>
</dbReference>
<dbReference type="PDB" id="8JTC">
    <property type="method" value="EM"/>
    <property type="resolution" value="3.52 A"/>
    <property type="chains" value="A=18-474"/>
</dbReference>
<dbReference type="PDB" id="8T69">
    <property type="method" value="EM"/>
    <property type="resolution" value="2.89 A"/>
    <property type="chains" value="A=19-514"/>
</dbReference>
<dbReference type="PDB" id="8T6A">
    <property type="method" value="EM"/>
    <property type="resolution" value="3.17 A"/>
    <property type="chains" value="A=19-514"/>
</dbReference>
<dbReference type="PDB" id="8T6B">
    <property type="method" value="EM"/>
    <property type="resolution" value="3.72 A"/>
    <property type="chains" value="A=19-514"/>
</dbReference>
<dbReference type="PDB" id="8THR">
    <property type="method" value="EM"/>
    <property type="resolution" value="3.12 A"/>
    <property type="chains" value="A=12-483"/>
</dbReference>
<dbReference type="PDB" id="8UCJ">
    <property type="method" value="EM"/>
    <property type="resolution" value="3.20 A"/>
    <property type="chains" value="A=1-514"/>
</dbReference>
<dbReference type="PDB" id="8UCK">
    <property type="method" value="EM"/>
    <property type="resolution" value="3.26 A"/>
    <property type="chains" value="A=1-514"/>
</dbReference>
<dbReference type="PDB" id="8UCL">
    <property type="method" value="EM"/>
    <property type="resolution" value="3.18 A"/>
    <property type="chains" value="A=1-514"/>
</dbReference>
<dbReference type="PDB" id="8UCM">
    <property type="method" value="EM"/>
    <property type="resolution" value="3.14 A"/>
    <property type="chains" value="A=1-514"/>
</dbReference>
<dbReference type="PDB" id="8UCN">
    <property type="method" value="EM"/>
    <property type="resolution" value="3.31 A"/>
    <property type="chains" value="A=1-514"/>
</dbReference>
<dbReference type="PDB" id="8UCO">
    <property type="method" value="EM"/>
    <property type="resolution" value="3.25 A"/>
    <property type="chains" value="A=1-514"/>
</dbReference>
<dbReference type="PDB" id="8UCP">
    <property type="method" value="EM"/>
    <property type="resolution" value="3.28 A"/>
    <property type="chains" value="A=1-514"/>
</dbReference>
<dbReference type="PDB" id="8WLJ">
    <property type="method" value="EM"/>
    <property type="resolution" value="3.60 A"/>
    <property type="chains" value="A=1-474"/>
</dbReference>
<dbReference type="PDB" id="8WLK">
    <property type="method" value="EM"/>
    <property type="resolution" value="3.37 A"/>
    <property type="chains" value="A=1-474"/>
</dbReference>
<dbReference type="PDB" id="8WLL">
    <property type="method" value="EM"/>
    <property type="resolution" value="3.74 A"/>
    <property type="chains" value="A=1-474"/>
</dbReference>
<dbReference type="PDB" id="8WLM">
    <property type="method" value="EM"/>
    <property type="resolution" value="3.57 A"/>
    <property type="chains" value="A=1-474"/>
</dbReference>
<dbReference type="PDB" id="8WRD">
    <property type="method" value="EM"/>
    <property type="resolution" value="3.05 A"/>
    <property type="chains" value="A=1-514"/>
</dbReference>
<dbReference type="PDB" id="8WRE">
    <property type="method" value="EM"/>
    <property type="resolution" value="2.90 A"/>
    <property type="chains" value="A=1-514"/>
</dbReference>
<dbReference type="PDB" id="8WVG">
    <property type="method" value="EM"/>
    <property type="resolution" value="3.18 A"/>
    <property type="chains" value="A=1-514"/>
</dbReference>
<dbReference type="PDB" id="8X3K">
    <property type="method" value="EM"/>
    <property type="resolution" value="2.98 A"/>
    <property type="chains" value="A=12-514"/>
</dbReference>
<dbReference type="PDB" id="8XO9">
    <property type="method" value="EM"/>
    <property type="resolution" value="3.20 A"/>
    <property type="chains" value="A=17-474"/>
</dbReference>
<dbReference type="PDB" id="8XOA">
    <property type="method" value="EM"/>
    <property type="resolution" value="3.03 A"/>
    <property type="chains" value="A=18-474"/>
</dbReference>
<dbReference type="PDB" id="8XOB">
    <property type="method" value="EM"/>
    <property type="resolution" value="3.15 A"/>
    <property type="chains" value="A=18-474"/>
</dbReference>
<dbReference type="PDB" id="9KQ8">
    <property type="method" value="EM"/>
    <property type="resolution" value="3.38 A"/>
    <property type="chains" value="A=12-514"/>
</dbReference>
<dbReference type="PDB" id="9KQA">
    <property type="method" value="EM"/>
    <property type="resolution" value="3.28 A"/>
    <property type="chains" value="A=12-514"/>
</dbReference>
<dbReference type="PDB" id="9KQE">
    <property type="method" value="EM"/>
    <property type="resolution" value="3.00 A"/>
    <property type="chains" value="A=12-514"/>
</dbReference>
<dbReference type="PDBsum" id="8JSW"/>
<dbReference type="PDBsum" id="8JSX"/>
<dbReference type="PDBsum" id="8JT5"/>
<dbReference type="PDBsum" id="8JT9"/>
<dbReference type="PDBsum" id="8JTA"/>
<dbReference type="PDBsum" id="8JTB"/>
<dbReference type="PDBsum" id="8JTC"/>
<dbReference type="PDBsum" id="8T69"/>
<dbReference type="PDBsum" id="8T6A"/>
<dbReference type="PDBsum" id="8T6B"/>
<dbReference type="PDBsum" id="8THR"/>
<dbReference type="PDBsum" id="8UCJ"/>
<dbReference type="PDBsum" id="8UCK"/>
<dbReference type="PDBsum" id="8UCL"/>
<dbReference type="PDBsum" id="8UCM"/>
<dbReference type="PDBsum" id="8UCN"/>
<dbReference type="PDBsum" id="8UCO"/>
<dbReference type="PDBsum" id="8UCP"/>
<dbReference type="PDBsum" id="8WLJ"/>
<dbReference type="PDBsum" id="8WLK"/>
<dbReference type="PDBsum" id="8WLL"/>
<dbReference type="PDBsum" id="8WLM"/>
<dbReference type="PDBsum" id="8WRD"/>
<dbReference type="PDBsum" id="8WRE"/>
<dbReference type="PDBsum" id="8WVG"/>
<dbReference type="PDBsum" id="8X3K"/>
<dbReference type="PDBsum" id="8XO9"/>
<dbReference type="PDBsum" id="8XOA"/>
<dbReference type="PDBsum" id="8XOB"/>
<dbReference type="PDBsum" id="9KQ8"/>
<dbReference type="PDBsum" id="9KQA"/>
<dbReference type="PDBsum" id="9KQE"/>
<dbReference type="EMDB" id="EMD-36628"/>
<dbReference type="EMDB" id="EMD-36629"/>
<dbReference type="EMDB" id="EMD-36633"/>
<dbReference type="EMDB" id="EMD-36637"/>
<dbReference type="EMDB" id="EMD-36638"/>
<dbReference type="EMDB" id="EMD-36639"/>
<dbReference type="EMDB" id="EMD-36640"/>
<dbReference type="EMDB" id="EMD-37621"/>
<dbReference type="EMDB" id="EMD-37622"/>
<dbReference type="EMDB" id="EMD-37623"/>
<dbReference type="EMDB" id="EMD-37624"/>
<dbReference type="EMDB" id="EMD-37774"/>
<dbReference type="EMDB" id="EMD-37775"/>
<dbReference type="EMDB" id="EMD-37867"/>
<dbReference type="EMDB" id="EMD-38038"/>
<dbReference type="EMDB" id="EMD-38523"/>
<dbReference type="EMDB" id="EMD-38524"/>
<dbReference type="EMDB" id="EMD-38525"/>
<dbReference type="EMDB" id="EMD-41066"/>
<dbReference type="EMDB" id="EMD-41067"/>
<dbReference type="EMDB" id="EMD-41068"/>
<dbReference type="EMDB" id="EMD-41269"/>
<dbReference type="EMDB" id="EMD-42128"/>
<dbReference type="EMDB" id="EMD-42129"/>
<dbReference type="EMDB" id="EMD-42130"/>
<dbReference type="EMDB" id="EMD-42131"/>
<dbReference type="EMDB" id="EMD-42132"/>
<dbReference type="EMDB" id="EMD-42133"/>
<dbReference type="EMDB" id="EMD-42134"/>
<dbReference type="EMDB" id="EMD-62497"/>
<dbReference type="EMDB" id="EMD-62498"/>
<dbReference type="EMDB" id="EMD-62501"/>
<dbReference type="SMR" id="Q05940"/>
<dbReference type="BioGRID" id="112459">
    <property type="interactions" value="104"/>
</dbReference>
<dbReference type="CORUM" id="Q05940"/>
<dbReference type="FunCoup" id="Q05940">
    <property type="interactions" value="388"/>
</dbReference>
<dbReference type="IntAct" id="Q05940">
    <property type="interactions" value="97"/>
</dbReference>
<dbReference type="STRING" id="9606.ENSP00000496339"/>
<dbReference type="BindingDB" id="Q05940"/>
<dbReference type="ChEMBL" id="CHEMBL1893"/>
<dbReference type="DrugBank" id="DB01472">
    <property type="generic name" value="4-Methoxyamphetamine"/>
</dbReference>
<dbReference type="DrugBank" id="DB00182">
    <property type="generic name" value="Amphetamine"/>
</dbReference>
<dbReference type="DrugBank" id="DB00714">
    <property type="generic name" value="Apomorphine"/>
</dbReference>
<dbReference type="DrugBank" id="DB00865">
    <property type="generic name" value="Benzphetamine"/>
</dbReference>
<dbReference type="DrugBank" id="DB01089">
    <property type="generic name" value="Deserpidine"/>
</dbReference>
<dbReference type="DrugBank" id="DB12161">
    <property type="generic name" value="Deutetrabenazine"/>
</dbReference>
<dbReference type="DrugBank" id="DB01576">
    <property type="generic name" value="Dextroamphetamine"/>
</dbReference>
<dbReference type="DrugBank" id="DB00988">
    <property type="generic name" value="Dopamine"/>
</dbReference>
<dbReference type="DrugBank" id="DB01363">
    <property type="generic name" value="Ephedra sinica root"/>
</dbReference>
<dbReference type="DrugBank" id="DB01364">
    <property type="generic name" value="Ephedrine"/>
</dbReference>
<dbReference type="DrugBank" id="DB12010">
    <property type="generic name" value="Fostamatinib"/>
</dbReference>
<dbReference type="DrugBank" id="DB00502">
    <property type="generic name" value="Haloperidol"/>
</dbReference>
<dbReference type="DrugBank" id="DB05381">
    <property type="generic name" value="Histamine"/>
</dbReference>
<dbReference type="DrugBank" id="DB06706">
    <property type="generic name" value="Isometheptene"/>
</dbReference>
<dbReference type="DrugBank" id="DB05137">
    <property type="generic name" value="Lobeline"/>
</dbReference>
<dbReference type="DrugBank" id="DB00579">
    <property type="generic name" value="Mazindol"/>
</dbReference>
<dbReference type="DrugBank" id="DB01577">
    <property type="generic name" value="Metamfetamine"/>
</dbReference>
<dbReference type="DrugBank" id="DB01454">
    <property type="generic name" value="Midomafetamine"/>
</dbReference>
<dbReference type="DrugBank" id="DB01442">
    <property type="generic name" value="MMDA"/>
</dbReference>
<dbReference type="DrugBank" id="DB04821">
    <property type="generic name" value="Nomifensine"/>
</dbReference>
<dbReference type="DrugBank" id="DB00368">
    <property type="generic name" value="Norepinephrine"/>
</dbReference>
<dbReference type="DrugBank" id="DB06714">
    <property type="generic name" value="Propylhexedrine"/>
</dbReference>
<dbReference type="DrugBank" id="DB09363">
    <property type="generic name" value="Rauwolfia serpentina root"/>
</dbReference>
<dbReference type="DrugBank" id="DB00206">
    <property type="generic name" value="Reserpine"/>
</dbReference>
<dbReference type="DrugBank" id="DB08839">
    <property type="generic name" value="Serotonin"/>
</dbReference>
<dbReference type="DrugBank" id="DB04844">
    <property type="generic name" value="Tetrabenazine"/>
</dbReference>
<dbReference type="DrugBank" id="DB11915">
    <property type="generic name" value="Valbenazine"/>
</dbReference>
<dbReference type="DrugCentral" id="Q05940"/>
<dbReference type="GuidetoPHARMACOLOGY" id="1012"/>
<dbReference type="TCDB" id="2.A.1.2.29">
    <property type="family name" value="the major facilitator superfamily (mfs)"/>
</dbReference>
<dbReference type="GlyCosmos" id="Q05940">
    <property type="glycosylation" value="2 sites, No reported glycans"/>
</dbReference>
<dbReference type="GlyGen" id="Q05940">
    <property type="glycosylation" value="2 sites"/>
</dbReference>
<dbReference type="iPTMnet" id="Q05940"/>
<dbReference type="PhosphoSitePlus" id="Q05940"/>
<dbReference type="BioMuta" id="SLC18A2"/>
<dbReference type="DMDM" id="1722742"/>
<dbReference type="MassIVE" id="Q05940"/>
<dbReference type="PaxDb" id="9606-ENSP00000298472"/>
<dbReference type="PeptideAtlas" id="Q05940"/>
<dbReference type="ProteomicsDB" id="58362">
    <molecule id="Q05940-1"/>
</dbReference>
<dbReference type="ABCD" id="Q05940">
    <property type="antibodies" value="1 sequenced antibody"/>
</dbReference>
<dbReference type="Antibodypedia" id="2802">
    <property type="antibodies" value="416 antibodies from 37 providers"/>
</dbReference>
<dbReference type="DNASU" id="6571"/>
<dbReference type="Ensembl" id="ENST00000644641.2">
    <molecule id="Q05940-1"/>
    <property type="protein sequence ID" value="ENSP00000496339.1"/>
    <property type="gene ID" value="ENSG00000165646.14"/>
</dbReference>
<dbReference type="GeneID" id="6571"/>
<dbReference type="KEGG" id="hsa:6571"/>
<dbReference type="MANE-Select" id="ENST00000644641.2">
    <property type="protein sequence ID" value="ENSP00000496339.1"/>
    <property type="RefSeq nucleotide sequence ID" value="NM_003054.6"/>
    <property type="RefSeq protein sequence ID" value="NP_003045.2"/>
</dbReference>
<dbReference type="UCSC" id="uc001ldd.3">
    <molecule id="Q05940-1"/>
    <property type="organism name" value="human"/>
</dbReference>
<dbReference type="AGR" id="HGNC:10935"/>
<dbReference type="CTD" id="6571"/>
<dbReference type="DisGeNET" id="6571"/>
<dbReference type="GeneCards" id="SLC18A2"/>
<dbReference type="HGNC" id="HGNC:10935">
    <property type="gene designation" value="SLC18A2"/>
</dbReference>
<dbReference type="HPA" id="ENSG00000165646">
    <property type="expression patterns" value="Tissue enhanced (brain, cervix)"/>
</dbReference>
<dbReference type="MalaCards" id="SLC18A2"/>
<dbReference type="MIM" id="193001">
    <property type="type" value="gene"/>
</dbReference>
<dbReference type="MIM" id="618049">
    <property type="type" value="phenotype"/>
</dbReference>
<dbReference type="neXtProt" id="NX_Q05940"/>
<dbReference type="OpenTargets" id="ENSG00000165646"/>
<dbReference type="Orphanet" id="352649">
    <property type="disease" value="Brain dopamine-serotonin vesicular transport disease"/>
</dbReference>
<dbReference type="PharmGKB" id="PA325"/>
<dbReference type="VEuPathDB" id="HostDB:ENSG00000165646"/>
<dbReference type="eggNOG" id="KOG3764">
    <property type="taxonomic scope" value="Eukaryota"/>
</dbReference>
<dbReference type="GeneTree" id="ENSGT00940000157593"/>
<dbReference type="HOGENOM" id="CLU_001265_10_9_1"/>
<dbReference type="InParanoid" id="Q05940"/>
<dbReference type="OMA" id="IVAPLWG"/>
<dbReference type="OrthoDB" id="5086884at2759"/>
<dbReference type="PAN-GO" id="Q05940">
    <property type="GO annotations" value="4 GO annotations based on evolutionary models"/>
</dbReference>
<dbReference type="PhylomeDB" id="Q05940"/>
<dbReference type="TreeFam" id="TF313494"/>
<dbReference type="PathwayCommons" id="Q05940"/>
<dbReference type="Reactome" id="R-HSA-181429">
    <property type="pathway name" value="Serotonin Neurotransmitter Release Cycle"/>
</dbReference>
<dbReference type="Reactome" id="R-HSA-181430">
    <property type="pathway name" value="Norepinephrine Neurotransmitter Release Cycle"/>
</dbReference>
<dbReference type="Reactome" id="R-HSA-212676">
    <property type="pathway name" value="Dopamine Neurotransmitter Release Cycle"/>
</dbReference>
<dbReference type="Reactome" id="R-HSA-442660">
    <property type="pathway name" value="Na+/Cl- dependent neurotransmitter transporters"/>
</dbReference>
<dbReference type="SignaLink" id="Q05940"/>
<dbReference type="SIGNOR" id="Q05940"/>
<dbReference type="BioGRID-ORCS" id="6571">
    <property type="hits" value="12 hits in 1163 CRISPR screens"/>
</dbReference>
<dbReference type="ChiTaRS" id="SLC18A2">
    <property type="organism name" value="human"/>
</dbReference>
<dbReference type="GeneWiki" id="Vesicular_monoamine_transporter_2"/>
<dbReference type="GenomeRNAi" id="6571"/>
<dbReference type="Pharos" id="Q05940">
    <property type="development level" value="Tclin"/>
</dbReference>
<dbReference type="PRO" id="PR:Q05940"/>
<dbReference type="Proteomes" id="UP000005640">
    <property type="component" value="Chromosome 10"/>
</dbReference>
<dbReference type="RNAct" id="Q05940">
    <property type="molecule type" value="protein"/>
</dbReference>
<dbReference type="Bgee" id="ENSG00000165646">
    <property type="expression patterns" value="Expressed in substantia nigra pars reticulata and 123 other cell types or tissues"/>
</dbReference>
<dbReference type="GO" id="GO:0030424">
    <property type="term" value="C:axon"/>
    <property type="evidence" value="ECO:0000250"/>
    <property type="project" value="UniProtKB"/>
</dbReference>
<dbReference type="GO" id="GO:0005813">
    <property type="term" value="C:centrosome"/>
    <property type="evidence" value="ECO:0000314"/>
    <property type="project" value="HPA"/>
</dbReference>
<dbReference type="GO" id="GO:0070083">
    <property type="term" value="C:clathrin-sculpted monoamine transport vesicle membrane"/>
    <property type="evidence" value="ECO:0000304"/>
    <property type="project" value="Reactome"/>
</dbReference>
<dbReference type="GO" id="GO:0030425">
    <property type="term" value="C:dendrite"/>
    <property type="evidence" value="ECO:0000250"/>
    <property type="project" value="UniProtKB"/>
</dbReference>
<dbReference type="GO" id="GO:0098691">
    <property type="term" value="C:dopaminergic synapse"/>
    <property type="evidence" value="ECO:0007669"/>
    <property type="project" value="Ensembl"/>
</dbReference>
<dbReference type="GO" id="GO:0043231">
    <property type="term" value="C:intracellular membrane-bounded organelle"/>
    <property type="evidence" value="ECO:0000314"/>
    <property type="project" value="HPA"/>
</dbReference>
<dbReference type="GO" id="GO:0016020">
    <property type="term" value="C:membrane"/>
    <property type="evidence" value="ECO:0000304"/>
    <property type="project" value="ProtInc"/>
</dbReference>
<dbReference type="GO" id="GO:0005886">
    <property type="term" value="C:plasma membrane"/>
    <property type="evidence" value="ECO:0000304"/>
    <property type="project" value="Reactome"/>
</dbReference>
<dbReference type="GO" id="GO:0030667">
    <property type="term" value="C:secretory granule membrane"/>
    <property type="evidence" value="ECO:0000250"/>
    <property type="project" value="UniProtKB"/>
</dbReference>
<dbReference type="GO" id="GO:0008021">
    <property type="term" value="C:synaptic vesicle"/>
    <property type="evidence" value="ECO:0000304"/>
    <property type="project" value="ParkinsonsUK-UCL"/>
</dbReference>
<dbReference type="GO" id="GO:0030672">
    <property type="term" value="C:synaptic vesicle membrane"/>
    <property type="evidence" value="ECO:0000250"/>
    <property type="project" value="UniProtKB"/>
</dbReference>
<dbReference type="GO" id="GO:0043195">
    <property type="term" value="C:terminal bouton"/>
    <property type="evidence" value="ECO:0000318"/>
    <property type="project" value="GO_Central"/>
</dbReference>
<dbReference type="GO" id="GO:0008504">
    <property type="term" value="F:monoamine transmembrane transporter activity"/>
    <property type="evidence" value="ECO:0000304"/>
    <property type="project" value="Reactome"/>
</dbReference>
<dbReference type="GO" id="GO:0015311">
    <property type="term" value="F:monoamine:proton antiporter activity"/>
    <property type="evidence" value="ECO:0000314"/>
    <property type="project" value="UniProtKB"/>
</dbReference>
<dbReference type="GO" id="GO:0005335">
    <property type="term" value="F:serotonin:sodium:chloride symporter activity"/>
    <property type="evidence" value="ECO:0000318"/>
    <property type="project" value="GO_Central"/>
</dbReference>
<dbReference type="GO" id="GO:0015842">
    <property type="term" value="P:aminergic neurotransmitter loading into synaptic vesicle"/>
    <property type="evidence" value="ECO:0000318"/>
    <property type="project" value="GO_Central"/>
</dbReference>
<dbReference type="GO" id="GO:0007268">
    <property type="term" value="P:chemical synaptic transmission"/>
    <property type="evidence" value="ECO:0000304"/>
    <property type="project" value="ParkinsonsUK-UCL"/>
</dbReference>
<dbReference type="GO" id="GO:0015872">
    <property type="term" value="P:dopamine transport"/>
    <property type="evidence" value="ECO:0000304"/>
    <property type="project" value="ParkinsonsUK-UCL"/>
</dbReference>
<dbReference type="GO" id="GO:0002553">
    <property type="term" value="P:histamine secretion by mast cell"/>
    <property type="evidence" value="ECO:0007669"/>
    <property type="project" value="Ensembl"/>
</dbReference>
<dbReference type="GO" id="GO:0051615">
    <property type="term" value="P:histamine uptake"/>
    <property type="evidence" value="ECO:0000314"/>
    <property type="project" value="UniProtKB"/>
</dbReference>
<dbReference type="GO" id="GO:0007626">
    <property type="term" value="P:locomotory behavior"/>
    <property type="evidence" value="ECO:0007669"/>
    <property type="project" value="Ensembl"/>
</dbReference>
<dbReference type="GO" id="GO:0015844">
    <property type="term" value="P:monoamine transport"/>
    <property type="evidence" value="ECO:0000304"/>
    <property type="project" value="ProtInc"/>
</dbReference>
<dbReference type="GO" id="GO:1903427">
    <property type="term" value="P:negative regulation of reactive oxygen species biosynthetic process"/>
    <property type="evidence" value="ECO:0000303"/>
    <property type="project" value="ParkinsonsUK-UCL"/>
</dbReference>
<dbReference type="GO" id="GO:0098700">
    <property type="term" value="P:neurotransmitter loading into synaptic vesicle"/>
    <property type="evidence" value="ECO:0000304"/>
    <property type="project" value="ParkinsonsUK-UCL"/>
</dbReference>
<dbReference type="GO" id="GO:0006836">
    <property type="term" value="P:neurotransmitter transport"/>
    <property type="evidence" value="ECO:0000304"/>
    <property type="project" value="Reactome"/>
</dbReference>
<dbReference type="GO" id="GO:0009791">
    <property type="term" value="P:post-embryonic development"/>
    <property type="evidence" value="ECO:0007669"/>
    <property type="project" value="Ensembl"/>
</dbReference>
<dbReference type="GO" id="GO:0001975">
    <property type="term" value="P:response to amphetamine"/>
    <property type="evidence" value="ECO:0007669"/>
    <property type="project" value="Ensembl"/>
</dbReference>
<dbReference type="GO" id="GO:0009636">
    <property type="term" value="P:response to toxic substance"/>
    <property type="evidence" value="ECO:0007669"/>
    <property type="project" value="Ensembl"/>
</dbReference>
<dbReference type="GO" id="GO:0002552">
    <property type="term" value="P:serotonin secretion by mast cell"/>
    <property type="evidence" value="ECO:0007669"/>
    <property type="project" value="Ensembl"/>
</dbReference>
<dbReference type="GO" id="GO:0051610">
    <property type="term" value="P:serotonin uptake"/>
    <property type="evidence" value="ECO:0000314"/>
    <property type="project" value="UniProtKB"/>
</dbReference>
<dbReference type="GO" id="GO:0099123">
    <property type="term" value="P:somato-dendritic dopamine secretion"/>
    <property type="evidence" value="ECO:0000250"/>
    <property type="project" value="UniProtKB"/>
</dbReference>
<dbReference type="CDD" id="cd17384">
    <property type="entry name" value="MFS_SLC18A1_2_VAT1_2"/>
    <property type="match status" value="1"/>
</dbReference>
<dbReference type="FunFam" id="1.20.1250.20:FF:000083">
    <property type="entry name" value="synaptic vesicular amine transporter isoform X1"/>
    <property type="match status" value="1"/>
</dbReference>
<dbReference type="FunFam" id="1.20.1250.20:FF:000116">
    <property type="entry name" value="synaptic vesicular amine transporter isoform X2"/>
    <property type="match status" value="1"/>
</dbReference>
<dbReference type="Gene3D" id="1.20.1250.20">
    <property type="entry name" value="MFS general substrate transporter like domains"/>
    <property type="match status" value="2"/>
</dbReference>
<dbReference type="InterPro" id="IPR011701">
    <property type="entry name" value="MFS"/>
</dbReference>
<dbReference type="InterPro" id="IPR020846">
    <property type="entry name" value="MFS_dom"/>
</dbReference>
<dbReference type="InterPro" id="IPR036259">
    <property type="entry name" value="MFS_trans_sf"/>
</dbReference>
<dbReference type="InterPro" id="IPR050930">
    <property type="entry name" value="MFS_Vesicular_Transporter"/>
</dbReference>
<dbReference type="PANTHER" id="PTHR23506">
    <property type="entry name" value="GH10249P"/>
    <property type="match status" value="1"/>
</dbReference>
<dbReference type="PANTHER" id="PTHR23506:SF30">
    <property type="entry name" value="SYNAPTIC VESICULAR AMINE TRANSPORTER"/>
    <property type="match status" value="1"/>
</dbReference>
<dbReference type="Pfam" id="PF07690">
    <property type="entry name" value="MFS_1"/>
    <property type="match status" value="1"/>
</dbReference>
<dbReference type="SUPFAM" id="SSF103473">
    <property type="entry name" value="MFS general substrate transporter"/>
    <property type="match status" value="1"/>
</dbReference>
<dbReference type="PROSITE" id="PS50850">
    <property type="entry name" value="MFS"/>
    <property type="match status" value="1"/>
</dbReference>
<feature type="chain" id="PRO_0000127514" description="Synaptic vesicular amine transporter">
    <location>
        <begin position="1"/>
        <end position="514"/>
    </location>
</feature>
<feature type="topological domain" description="Cytoplasmic" evidence="6 7 8 19 20 21 22 23 24 25 26">
    <location>
        <begin position="1"/>
        <end position="20"/>
    </location>
</feature>
<feature type="transmembrane region" description="Helical; Name=1" evidence="6 7 8 19 20 21 22 23 24 25 26">
    <location>
        <begin position="21"/>
        <end position="41"/>
    </location>
</feature>
<feature type="topological domain" description="Lumenal, vesicle" evidence="6 7 8 19 20 21 22 23 24 25 26">
    <location>
        <begin position="42"/>
        <end position="129"/>
    </location>
</feature>
<feature type="transmembrane region" description="Helical; Name=2" evidence="6 7 8 19 20 21 22 23 24 25 26">
    <location>
        <begin position="130"/>
        <end position="150"/>
    </location>
</feature>
<feature type="topological domain" description="Cytoplasmic" evidence="6 7 8 19 20 21 22 23 24 25 26">
    <location>
        <begin position="151"/>
        <end position="159"/>
    </location>
</feature>
<feature type="transmembrane region" description="Helical; Name=3" evidence="6 7 8 19 20 21 22 23 24 25 26">
    <location>
        <begin position="160"/>
        <end position="180"/>
    </location>
</feature>
<feature type="topological domain" description="Lumenal, vesicle" evidence="6 7 8 19 20 21 22 23 24 25 26">
    <location>
        <begin position="181"/>
        <end position="189"/>
    </location>
</feature>
<feature type="transmembrane region" description="Helical; Name=4" evidence="6 7 8 19 20 21 22 23 24 25 26">
    <location>
        <begin position="190"/>
        <end position="210"/>
    </location>
</feature>
<feature type="topological domain" description="Cytoplasmic" evidence="6 7 8 19 20 21 22 23 24 25 26">
    <location>
        <begin position="211"/>
        <end position="219"/>
    </location>
</feature>
<feature type="transmembrane region" description="Helical; Name=5" evidence="6 7 8 19 20 21 22 23 24 25 26">
    <location>
        <begin position="220"/>
        <end position="242"/>
    </location>
</feature>
<feature type="topological domain" description="Lumenal, vesicle" evidence="6 7 8 19 20 21 22 23 24 25 26">
    <location>
        <begin position="243"/>
        <end position="248"/>
    </location>
</feature>
<feature type="transmembrane region" description="Helical; Name=6" evidence="6 7 8 19 20 21 22 23 24 25 26">
    <location>
        <begin position="249"/>
        <end position="271"/>
    </location>
</feature>
<feature type="topological domain" description="Cytoplasmic" evidence="6 7 8 19 20 21 22 23 24 25 26">
    <location>
        <begin position="272"/>
        <end position="291"/>
    </location>
</feature>
<feature type="transmembrane region" description="Helical; Name=7" evidence="6 7 8 19 20 21 22 23 24 25 26">
    <location>
        <begin position="292"/>
        <end position="311"/>
    </location>
</feature>
<feature type="topological domain" description="Lumenal, vesicle" evidence="6 7 8 19 20 21 22 23 24 25 26">
    <location>
        <begin position="312"/>
        <end position="328"/>
    </location>
</feature>
<feature type="transmembrane region" description="Helical; Name=8" evidence="6 7 8 19 20 21 22 23 24 25 26">
    <location>
        <begin position="329"/>
        <end position="352"/>
    </location>
</feature>
<feature type="topological domain" description="Cytoplasmic" evidence="6 7 8 19 20 21 22 23 24 25 26">
    <location>
        <begin position="353"/>
        <end position="357"/>
    </location>
</feature>
<feature type="transmembrane region" description="Helical; Name=9" evidence="6 7 8 19 20 21 22 23 24 25 26">
    <location>
        <begin position="358"/>
        <end position="378"/>
    </location>
</feature>
<feature type="topological domain" description="Lumenal, vesicle" evidence="6 7 8 19 20 21 22 23 24 25 26">
    <location>
        <begin position="379"/>
        <end position="389"/>
    </location>
</feature>
<feature type="transmembrane region" description="Helical; Name=10" evidence="6 7 8 19 20 21 22 23 24 25 26">
    <location>
        <begin position="390"/>
        <end position="410"/>
    </location>
</feature>
<feature type="topological domain" description="Cytoplasmic" evidence="6 7 8 19 20 21 22 23 24 25 26">
    <location>
        <begin position="411"/>
        <end position="414"/>
    </location>
</feature>
<feature type="transmembrane region" description="Helical; Name=11" evidence="6 7 8 19 20 21 22 23 24 25 26">
    <location>
        <begin position="415"/>
        <end position="435"/>
    </location>
</feature>
<feature type="topological domain" description="Lumenal, vesicle" evidence="6 7 8 19 20 21 22 23 24 25 26">
    <location>
        <begin position="436"/>
        <end position="440"/>
    </location>
</feature>
<feature type="transmembrane region" description="Helical; Name=12" evidence="6 7 8 19 20 21 22 23 24 25 26">
    <location>
        <begin position="441"/>
        <end position="462"/>
    </location>
</feature>
<feature type="topological domain" description="Cytoplasmic" evidence="6 7 8 19 20 21 22 23 24 25 26">
    <location>
        <begin position="463"/>
        <end position="514"/>
    </location>
</feature>
<feature type="binding site" evidence="7">
    <location>
        <position position="228"/>
    </location>
    <ligand>
        <name>serotonin</name>
        <dbReference type="ChEBI" id="CHEBI:350546"/>
    </ligand>
</feature>
<feature type="binding site" evidence="6 7">
    <location>
        <position position="232"/>
    </location>
    <ligand>
        <name>serotonin</name>
        <dbReference type="ChEBI" id="CHEBI:350546"/>
    </ligand>
</feature>
<feature type="binding site" evidence="7 19">
    <location>
        <position position="305"/>
    </location>
    <ligand>
        <name>serotonin</name>
        <dbReference type="ChEBI" id="CHEBI:350546"/>
    </ligand>
</feature>
<feature type="binding site" evidence="6 7">
    <location>
        <position position="308"/>
    </location>
    <ligand>
        <name>serotonin</name>
        <dbReference type="ChEBI" id="CHEBI:350546"/>
    </ligand>
</feature>
<feature type="binding site" evidence="6 7 19 25">
    <location>
        <position position="312"/>
    </location>
    <ligand>
        <name>serotonin</name>
        <dbReference type="ChEBI" id="CHEBI:350546"/>
    </ligand>
</feature>
<feature type="binding site" evidence="6 7 25">
    <location>
        <position position="334"/>
    </location>
    <ligand>
        <name>serotonin</name>
        <dbReference type="ChEBI" id="CHEBI:350546"/>
    </ligand>
</feature>
<feature type="binding site" evidence="7">
    <location>
        <position position="341"/>
    </location>
    <ligand>
        <name>serotonin</name>
        <dbReference type="ChEBI" id="CHEBI:350546"/>
    </ligand>
</feature>
<feature type="binding site" evidence="7">
    <location>
        <position position="399"/>
    </location>
    <ligand>
        <name>serotonin</name>
        <dbReference type="ChEBI" id="CHEBI:350546"/>
    </ligand>
</feature>
<feature type="binding site" evidence="6 7 25">
    <location>
        <position position="433"/>
    </location>
    <ligand>
        <name>serotonin</name>
        <dbReference type="ChEBI" id="CHEBI:350546"/>
    </ligand>
</feature>
<feature type="modified residue" description="Phosphoserine" evidence="1">
    <location>
        <position position="511"/>
    </location>
</feature>
<feature type="modified residue" description="Phosphoserine" evidence="1">
    <location>
        <position position="513"/>
    </location>
</feature>
<feature type="glycosylation site" description="N-linked (GlcNAc...) asparagine" evidence="3">
    <location>
        <position position="84"/>
    </location>
</feature>
<feature type="glycosylation site" description="N-linked (GlcNAc...) asparagine" evidence="3">
    <location>
        <position position="91"/>
    </location>
</feature>
<feature type="disulfide bond" evidence="4">
    <location>
        <begin position="117"/>
        <end position="324"/>
    </location>
</feature>
<feature type="splice variant" id="VSP_057151" description="In isoform 2." evidence="11">
    <original>MGMLAS</original>
    <variation>RCGMPE</variation>
    <location>
        <begin position="204"/>
        <end position="209"/>
    </location>
</feature>
<feature type="splice variant" id="VSP_057152" description="In isoform 2." evidence="11">
    <location>
        <begin position="210"/>
        <end position="514"/>
    </location>
</feature>
<feature type="sequence variant" id="VAR_081069" description="In PKDYS2; strong decrease in serotonin transport; dbSNP:rs1392638187." evidence="5">
    <original>P</original>
    <variation>L</variation>
    <location>
        <position position="387"/>
    </location>
</feature>
<feature type="mutagenesis site" description="Abolishes dopamine uptake.">
    <original>D</original>
    <variation>A</variation>
    <location>
        <position position="33"/>
    </location>
</feature>
<feature type="mutagenesis site" description="Abolishes dopamine uptake. Abolishes serotonin uptake." evidence="6 7">
    <original>D</original>
    <variation>N</variation>
    <location>
        <position position="33"/>
    </location>
</feature>
<feature type="mutagenesis site" description="Abolishes binding to reserpine. Reduces binding to dihydrotetrabenazine. Reduces serotonin uptake." evidence="6 8">
    <original>N</original>
    <variation>A</variation>
    <location>
        <position position="34"/>
    </location>
</feature>
<feature type="mutagenesis site" description="Abolishes binding to dihydrotetrabenazine. Reduces serotonin uptake." evidence="8">
    <original>N</original>
    <variation>D</variation>
    <location>
        <position position="34"/>
    </location>
</feature>
<feature type="mutagenesis site" description="Reduces binding to dihydrotetrabenazine." evidence="8">
    <original>N</original>
    <variation>Q</variation>
    <location>
        <position position="34"/>
    </location>
</feature>
<feature type="mutagenesis site" description="Abolishes binding to dihydrotetrabenazine. Abolishes serotonin uptake." evidence="8">
    <original>N</original>
    <variation>T</variation>
    <location>
        <position position="34"/>
    </location>
</feature>
<feature type="mutagenesis site" description="Abolishes binding to dihydrotetrabenazine." evidence="6">
    <original>L</original>
    <variation>A</variation>
    <location>
        <position position="37"/>
    </location>
</feature>
<feature type="mutagenesis site" description="Reduces sensitivity to tetrabenazine. Reduces fluorescent false neurotransmitter FFN206 uptake. Abolishes binding to dihydrotetrabenazine. Abolishes serotonin uptake. Largely reduces sensitivity to tetrabenazine and slightly reduces FFN206 uptake; when associated with V-308 and F-433." evidence="6 8">
    <original>L</original>
    <variation>F</variation>
    <location>
        <position position="37"/>
    </location>
</feature>
<feature type="mutagenesis site" description="Abolishes binding to tetrabenazine. Reduces sensitivity to tetrabenazine." evidence="7">
    <original>L</original>
    <variation>Y</variation>
    <location>
        <position position="37"/>
    </location>
</feature>
<feature type="mutagenesis site" description="Abolishes binding to dihydrotetrabenazine. Abolishes dopamine uptake." evidence="6">
    <original>T</original>
    <variation>A</variation>
    <location>
        <position position="38"/>
    </location>
</feature>
<feature type="mutagenesis site" description="Abolishes binding to dihydrotetrabenazine. Reduces dopamine uptake." evidence="6">
    <original>V</original>
    <variation>A</variation>
    <location>
        <position position="41"/>
    </location>
</feature>
<feature type="mutagenesis site" description="Abolishes dopamine uptake." evidence="6">
    <original>P</original>
    <variation>A</variation>
    <location>
        <position position="45"/>
    </location>
</feature>
<feature type="mutagenesis site" description="Reduces serotonin uptake." evidence="8">
    <original>E</original>
    <variation>A</variation>
    <location>
        <position position="127"/>
    </location>
</feature>
<feature type="mutagenesis site" description="Abolishes binding to dihydrotetrabenazine. Reduces sensitivity to tetrabenazine. Abolishes FFN206 uptake. Abolishes binding to dihydrotetrabenazine. Abolishes serotonin uptake." evidence="6 8">
    <original>F</original>
    <variation>A</variation>
    <location>
        <position position="135"/>
    </location>
</feature>
<feature type="mutagenesis site" description="Reduces dopamine uptake. Abolishes binding to dihydrotetrabenazine. Abolishes serotonin uptake." evidence="6 8">
    <original>K</original>
    <variation>A</variation>
    <location>
        <position position="138"/>
    </location>
</feature>
<feature type="mutagenesis site" description="Abolishes binding to dihydrotetrabenazine. Abolishes serotonin uptake." evidence="6 8">
    <original>R</original>
    <variation>A</variation>
    <location>
        <position position="189"/>
    </location>
</feature>
<feature type="mutagenesis site" description="Abolishes binding to dihydrotetrabenazine. Abolishes binding to tetrabenazine. Abolishes serotonin uptake." evidence="6 7 8">
    <original>R</original>
    <variation>K</variation>
    <location>
        <position position="189"/>
    </location>
</feature>
<feature type="mutagenesis site" description="Abolishes serotonin uptake." evidence="7">
    <original>R</original>
    <variation>Q</variation>
    <location>
        <position position="189"/>
    </location>
</feature>
<feature type="mutagenesis site" description="Reduces dopamine uptake." evidence="6">
    <original>S</original>
    <variation>A</variation>
    <location>
        <position position="196"/>
    </location>
</feature>
<feature type="mutagenesis site" description="Reduces dopamine uptake." evidence="6">
    <original>M</original>
    <variation>A</variation>
    <location>
        <position position="204"/>
    </location>
</feature>
<feature type="mutagenesis site" description="Abolishes serotonin uptake; when associated with A-217." evidence="7">
    <original>D</original>
    <variation>A</variation>
    <location>
        <position position="214"/>
    </location>
</feature>
<feature type="mutagenesis site" description="Reduces dopamine uptake." evidence="6">
    <original>D</original>
    <variation>N</variation>
    <location>
        <position position="214"/>
    </location>
</feature>
<feature type="mutagenesis site" description="Abolishes dopamine uptake. Abolishes serotonin uptake; when associated with A-214." evidence="6 7">
    <original>R</original>
    <variation>A</variation>
    <location>
        <position position="217"/>
    </location>
</feature>
<feature type="mutagenesis site" description="Reduces dopamine uptake." evidence="6">
    <original>M</original>
    <variation>A</variation>
    <location>
        <position position="221"/>
    </location>
</feature>
<feature type="mutagenesis site" description="Reduces binding to reserpine." evidence="6">
    <original>L</original>
    <variation>A</variation>
    <location>
        <position position="225"/>
    </location>
</feature>
<feature type="mutagenesis site" description="Reduces sensitivity to reserpine." evidence="7">
    <original>L</original>
    <variation>A</variation>
    <location>
        <position position="228"/>
    </location>
</feature>
<feature type="mutagenesis site" description="Abolishes binding to dihydrotetrabenazine. Abolishes dopamine uptake." evidence="6">
    <original>V</original>
    <variation>A</variation>
    <location>
        <position position="232"/>
    </location>
</feature>
<feature type="mutagenesis site" description="Abolishes binding to reserpine." evidence="7">
    <original>V</original>
    <variation>F</variation>
    <location>
        <position position="232"/>
    </location>
</feature>
<feature type="mutagenesis site" description="Abolishes serotonin uptake. Abolishes binding to tetrabenazine. Reduces sensitivity to reserpine and tetrabenazine. Reduces binding to dihydrotetrabenazine." evidence="7 8">
    <original>V</original>
    <variation>L</variation>
    <location>
        <position position="232"/>
    </location>
</feature>
<feature type="mutagenesis site" description="Reduces serotonin uptake." evidence="7">
    <original>E</original>
    <variation>A</variation>
    <location>
        <position position="244"/>
    </location>
</feature>
<feature type="mutagenesis site" description="Reduces serotonin uptake." evidence="7">
    <original>N</original>
    <variation>A</variation>
    <location>
        <position position="305"/>
    </location>
</feature>
<feature type="mutagenesis site" description="Abolishes binding to dihydrotetrabenazine. Abolishes dopamine uptake. Reduces FFN206 uptake. Reduces serotonin uptake." evidence="6 7">
    <original>I</original>
    <variation>A</variation>
    <location>
        <position position="308"/>
    </location>
</feature>
<feature type="mutagenesis site" description="Reduces sensitivity to tetrabenazine. Largely reduces sensitivity to tetrabenazine and slightly reduces FFN206 uptake; when associated with F-37 and F-433." evidence="6">
    <original>I</original>
    <variation>V</variation>
    <location>
        <position position="308"/>
    </location>
</feature>
<feature type="mutagenesis site" description="Abolishes binding to dihydrotetrabenazine. Abolishes dopamine uptake. Abolishes serotonin uptake." evidence="6 7">
    <original>E</original>
    <variation>A</variation>
    <location>
        <position position="312"/>
    </location>
</feature>
<feature type="mutagenesis site" description="Abolishes dopamine uptake." evidence="6">
    <original>E</original>
    <variation>N</variation>
    <location>
        <position position="312"/>
    </location>
</feature>
<feature type="mutagenesis site" description="Abolishes dopamine uptake. Abolishes serotonin uptake. Reduces binding to dihydrotetrabenazine. Abolishes serotonin uptake." evidence="6 7 8">
    <original>E</original>
    <variation>Q</variation>
    <location>
        <position position="312"/>
    </location>
</feature>
<feature type="mutagenesis site" description="Abolishes dopamine uptake." evidence="6">
    <original>P</original>
    <variation>A</variation>
    <location>
        <position position="313"/>
    </location>
</feature>
<feature type="mutagenesis site" description="Abolishes dopamine uptake." evidence="6">
    <original>P</original>
    <variation>A</variation>
    <location>
        <position position="316"/>
    </location>
</feature>
<feature type="mutagenesis site" description="Abolishes binding to dihydrotetrabenazine. Abolishes dopamine uptake. Abolishes serotonin uptake." evidence="6 8">
    <original>W</original>
    <variation>A</variation>
    <location>
        <position position="318"/>
    </location>
</feature>
<feature type="mutagenesis site" description="Reduces binding to dihydrotetrabenazine. Reduces serotonin uptake." evidence="8">
    <original>W</original>
    <variation>F</variation>
    <location>
        <position position="318"/>
    </location>
</feature>
<feature type="mutagenesis site" description="Reduces binding to dihydrotetrabenazine. Reduces serotonin uptake." evidence="8">
    <original>W</original>
    <variation>H</variation>
    <location>
        <position position="318"/>
    </location>
</feature>
<feature type="mutagenesis site" description="Abolishes binding to dihydrotetrabenazine." evidence="8">
    <original>W</original>
    <variation>R</variation>
    <location>
        <position position="318"/>
    </location>
</feature>
<feature type="mutagenesis site" description="Abolishes binding to dihydrotetrabenazine. Reduces binding to reserpine. Abolishes dopamine uptake." evidence="6">
    <original>F</original>
    <variation>A</variation>
    <location>
        <position position="334"/>
    </location>
</feature>
<feature type="mutagenesis site" description="Reduces dopamine uptake." evidence="6">
    <original>S</original>
    <variation>A</variation>
    <location>
        <position position="338"/>
    </location>
</feature>
<feature type="mutagenesis site" description="Abolishes serotonin uptake. Abolishes binding to reserpine." evidence="7">
    <original>S</original>
    <variation>F</variation>
    <location>
        <position position="338"/>
    </location>
</feature>
<feature type="mutagenesis site" description="Abolishes serotonin uptake." evidence="7">
    <original>I</original>
    <variation>A</variation>
    <variation>N</variation>
    <location>
        <position position="339"/>
    </location>
</feature>
<feature type="mutagenesis site" description="Reduces binding to dihydrotetrabenazine. Reduces binding to reserpine. Abolishes dopamine uptake. Abolishes serotonin uptake." evidence="6 7">
    <original>Y</original>
    <variation>A</variation>
    <location>
        <position position="341"/>
    </location>
</feature>
<feature type="mutagenesis site" description="Abolishes dopamine uptake." evidence="6">
    <original>R</original>
    <variation>A</variation>
    <location>
        <position position="357"/>
    </location>
</feature>
<feature type="mutagenesis site" description="Abolishes serotonin uptake." evidence="7">
    <original>R</original>
    <variation>Q</variation>
    <location>
        <position position="357"/>
    </location>
</feature>
<feature type="mutagenesis site" description="Reduces binding to reserpine." evidence="6">
    <original>I</original>
    <variation>A</variation>
    <location>
        <position position="395"/>
    </location>
</feature>
<feature type="mutagenesis site" description="Abolishes dopamine uptake." evidence="6">
    <original>D</original>
    <variation>A</variation>
    <variation>N</variation>
    <location>
        <position position="399"/>
    </location>
</feature>
<feature type="mutagenesis site" description="Reduces binding to reserpine. Reduces dopamine uptake." evidence="6">
    <original>M</original>
    <variation>A</variation>
    <location>
        <position position="403"/>
    </location>
</feature>
<feature type="mutagenesis site" description="Reduces dopamine uptake." evidence="6">
    <original>D</original>
    <variation>A</variation>
    <location>
        <position position="411"/>
    </location>
</feature>
<feature type="mutagenesis site" description="Reduces dopamine uptake. Reduces serotonin uptake." evidence="6 7">
    <original>D</original>
    <variation>N</variation>
    <location>
        <position position="411"/>
    </location>
</feature>
<feature type="mutagenesis site" description="Binds reserpine in the absence of a proton gradient. Abolishes dopamine uptake." evidence="6">
    <original>Y</original>
    <variation>S</variation>
    <location>
        <position position="418"/>
    </location>
</feature>
<feature type="mutagenesis site" description="Reduces dopamine uptake." evidence="6">
    <original>Y</original>
    <variation>A</variation>
    <location>
        <position position="422"/>
    </location>
</feature>
<feature type="mutagenesis site" description="Abolishes dopamine uptake." evidence="6">
    <original>D</original>
    <variation>A</variation>
    <location>
        <position position="426"/>
    </location>
</feature>
<feature type="mutagenesis site" description="Abolishes dopamine uptake. Abolishes serotonin uptake." evidence="6 7">
    <original>D</original>
    <variation>N</variation>
    <location>
        <position position="426"/>
    </location>
</feature>
<feature type="mutagenesis site" description="Abolishes binding to reserpine. Reduces serotonin uptake." evidence="6 8">
    <original>F</original>
    <variation>A</variation>
    <location>
        <position position="429"/>
    </location>
</feature>
<feature type="mutagenesis site" description="Abolishes binding to dihydrotetrabenazine. Slightly reduces binding to reserpine and FFN206 uptake. Reduces dopamine uptake. Reduces sensitivity to tetrabenazine." evidence="6 8">
    <original>Y</original>
    <variation>A</variation>
    <location>
        <position position="433"/>
    </location>
</feature>
<feature type="mutagenesis site" description="Slightly reduces sensitivity to tetrabenazine and FFN206 uptake. Reduces serotonin uptake. Reduces sensitivity to reserpine. Largely reduces sensitivity to tetrabenazine and slightly reduces FFN206 uptake; when associated with F-37 and V-308." evidence="6 7">
    <original>Y</original>
    <variation>F</variation>
    <location>
        <position position="433"/>
    </location>
</feature>
<feature type="sequence conflict" description="In Ref. 4; CAA50489." evidence="15" ref="4">
    <original>R</original>
    <variation>H</variation>
    <location>
        <position position="17"/>
    </location>
</feature>
<feature type="sequence conflict" description="In Ref. 1; AAA59877." evidence="15" ref="1">
    <original>C</original>
    <variation>S</variation>
    <location>
        <position position="302"/>
    </location>
</feature>
<feature type="sequence conflict" description="In Ref. 1; AAA59877." evidence="15" ref="1">
    <original>K</original>
    <variation>T</variation>
    <location>
        <position position="354"/>
    </location>
</feature>
<feature type="sequence conflict" description="In Ref. 1; AAA59877." evidence="15" ref="1">
    <original>A</original>
    <variation>P</variation>
    <location>
        <position position="378"/>
    </location>
</feature>
<feature type="sequence conflict" description="In Ref. 1; AAA59877." evidence="15" ref="1">
    <original>I</original>
    <variation>N</variation>
    <location>
        <position position="395"/>
    </location>
</feature>
<feature type="helix" evidence="29">
    <location>
        <begin position="9"/>
        <end position="13"/>
    </location>
</feature>
<feature type="helix" evidence="27">
    <location>
        <begin position="20"/>
        <end position="53"/>
    </location>
</feature>
<feature type="turn" evidence="28">
    <location>
        <begin position="121"/>
        <end position="123"/>
    </location>
</feature>
<feature type="helix" evidence="28">
    <location>
        <begin position="124"/>
        <end position="127"/>
    </location>
</feature>
<feature type="helix" evidence="27">
    <location>
        <begin position="129"/>
        <end position="156"/>
    </location>
</feature>
<feature type="helix" evidence="27">
    <location>
        <begin position="159"/>
        <end position="178"/>
    </location>
</feature>
<feature type="helix" evidence="27">
    <location>
        <begin position="182"/>
        <end position="210"/>
    </location>
</feature>
<feature type="helix" evidence="27">
    <location>
        <begin position="214"/>
        <end position="245"/>
    </location>
</feature>
<feature type="helix" evidence="27">
    <location>
        <begin position="250"/>
        <end position="269"/>
    </location>
</feature>
<feature type="helix" evidence="27">
    <location>
        <begin position="285"/>
        <end position="288"/>
    </location>
</feature>
<feature type="helix" evidence="27">
    <location>
        <begin position="292"/>
        <end position="322"/>
    </location>
</feature>
<feature type="helix" evidence="27">
    <location>
        <begin position="327"/>
        <end position="332"/>
    </location>
</feature>
<feature type="helix" evidence="27">
    <location>
        <begin position="335"/>
        <end position="355"/>
    </location>
</feature>
<feature type="helix" evidence="27">
    <location>
        <begin position="357"/>
        <end position="374"/>
    </location>
</feature>
<feature type="helix" evidence="27">
    <location>
        <begin position="375"/>
        <end position="377"/>
    </location>
</feature>
<feature type="helix" evidence="27">
    <location>
        <begin position="381"/>
        <end position="413"/>
    </location>
</feature>
<feature type="helix" evidence="27">
    <location>
        <begin position="419"/>
        <end position="446"/>
    </location>
</feature>
<feature type="helix" evidence="27">
    <location>
        <begin position="449"/>
        <end position="463"/>
    </location>
</feature>
<feature type="helix" evidence="27">
    <location>
        <begin position="464"/>
        <end position="470"/>
    </location>
</feature>
<accession>Q05940</accession>
<accession>B2RC96</accession>
<accession>D3DRC4</accession>
<accession>Q15876</accession>
<accession>Q4G147</accession>
<accession>Q5VW49</accession>
<accession>Q9H3P6</accession>
<reference key="1">
    <citation type="journal article" date="1993" name="FEBS Lett.">
        <title>A human synaptic vesicle monoamine transporter cDNA predicts posttranslational modifications, reveals chromosome 10 gene localization and identifies TaqI RFLPs.</title>
        <authorList>
            <person name="Surratt C.K."/>
            <person name="Persico A.M."/>
            <person name="Yang X.D."/>
            <person name="Edgar S.R."/>
            <person name="Bird G.S."/>
            <person name="Hawkins A.L."/>
            <person name="Griffin C.A."/>
            <person name="Li X."/>
            <person name="Jabs E.W."/>
            <person name="Uhl G.R."/>
        </authorList>
    </citation>
    <scope>NUCLEOTIDE SEQUENCE [MRNA] (ISOFORM 1)</scope>
</reference>
<reference key="2">
    <citation type="journal article" date="1993" name="J. Neurochem.">
        <title>Functional identification and molecular cloning of a human brain vesicle monoamine transporter.</title>
        <authorList>
            <person name="Erickson J.D."/>
            <person name="Eiden L.E."/>
        </authorList>
    </citation>
    <scope>NUCLEOTIDE SEQUENCE [MRNA] (ISOFORM 1)</scope>
</reference>
<reference key="3">
    <citation type="journal article" date="1993" name="Genomics">
        <title>Chromosomal localization of the human vesicular amine transporter genes.</title>
        <authorList>
            <person name="Peter D."/>
            <person name="Finn J.P."/>
            <person name="Klisak I."/>
            <person name="Liu Y."/>
            <person name="Kojis T."/>
            <person name="Heinzmann C."/>
            <person name="Roghani A."/>
            <person name="Sparkes R.S."/>
            <person name="Edwards R.H."/>
        </authorList>
    </citation>
    <scope>NUCLEOTIDE SEQUENCE [MRNA] (ISOFORM 1)</scope>
    <source>
        <tissue>Substantia nigra</tissue>
    </source>
</reference>
<reference key="4">
    <citation type="journal article" date="1993" name="J. Neural Transm.">
        <title>Extensive sequence divergence between the human and rat brain vesicular monoamine transporter: possible molecular basis for species differences in the susceptibility to MPP+.</title>
        <authorList>
            <person name="Lesch K.P."/>
            <person name="Gross J."/>
            <person name="Wolozin B.L."/>
            <person name="Murphy D.L."/>
            <person name="Riederer P."/>
        </authorList>
    </citation>
    <scope>NUCLEOTIDE SEQUENCE [MRNA] (ISOFORM 1)</scope>
    <source>
        <tissue>Brain</tissue>
    </source>
</reference>
<reference key="5">
    <citation type="journal article" date="2001" name="Mol. Psychiatry">
        <title>Exon/intron boundaries, novel polymorphisms, and association analysis with schizophrenia of the human synaptic vesicle monoamine transporter (SVMT) gene.</title>
        <authorList>
            <person name="Kunugi H."/>
            <person name="Ishida S."/>
            <person name="Akahane A."/>
            <person name="Nanko S."/>
        </authorList>
    </citation>
    <scope>NUCLEOTIDE SEQUENCE [GENOMIC DNA]</scope>
</reference>
<reference key="6">
    <citation type="journal article" date="2004" name="Nat. Genet.">
        <title>Complete sequencing and characterization of 21,243 full-length human cDNAs.</title>
        <authorList>
            <person name="Ota T."/>
            <person name="Suzuki Y."/>
            <person name="Nishikawa T."/>
            <person name="Otsuki T."/>
            <person name="Sugiyama T."/>
            <person name="Irie R."/>
            <person name="Wakamatsu A."/>
            <person name="Hayashi K."/>
            <person name="Sato H."/>
            <person name="Nagai K."/>
            <person name="Kimura K."/>
            <person name="Makita H."/>
            <person name="Sekine M."/>
            <person name="Obayashi M."/>
            <person name="Nishi T."/>
            <person name="Shibahara T."/>
            <person name="Tanaka T."/>
            <person name="Ishii S."/>
            <person name="Yamamoto J."/>
            <person name="Saito K."/>
            <person name="Kawai Y."/>
            <person name="Isono Y."/>
            <person name="Nakamura Y."/>
            <person name="Nagahari K."/>
            <person name="Murakami K."/>
            <person name="Yasuda T."/>
            <person name="Iwayanagi T."/>
            <person name="Wagatsuma M."/>
            <person name="Shiratori A."/>
            <person name="Sudo H."/>
            <person name="Hosoiri T."/>
            <person name="Kaku Y."/>
            <person name="Kodaira H."/>
            <person name="Kondo H."/>
            <person name="Sugawara M."/>
            <person name="Takahashi M."/>
            <person name="Kanda K."/>
            <person name="Yokoi T."/>
            <person name="Furuya T."/>
            <person name="Kikkawa E."/>
            <person name="Omura Y."/>
            <person name="Abe K."/>
            <person name="Kamihara K."/>
            <person name="Katsuta N."/>
            <person name="Sato K."/>
            <person name="Tanikawa M."/>
            <person name="Yamazaki M."/>
            <person name="Ninomiya K."/>
            <person name="Ishibashi T."/>
            <person name="Yamashita H."/>
            <person name="Murakawa K."/>
            <person name="Fujimori K."/>
            <person name="Tanai H."/>
            <person name="Kimata M."/>
            <person name="Watanabe M."/>
            <person name="Hiraoka S."/>
            <person name="Chiba Y."/>
            <person name="Ishida S."/>
            <person name="Ono Y."/>
            <person name="Takiguchi S."/>
            <person name="Watanabe S."/>
            <person name="Yosida M."/>
            <person name="Hotuta T."/>
            <person name="Kusano J."/>
            <person name="Kanehori K."/>
            <person name="Takahashi-Fujii A."/>
            <person name="Hara H."/>
            <person name="Tanase T.-O."/>
            <person name="Nomura Y."/>
            <person name="Togiya S."/>
            <person name="Komai F."/>
            <person name="Hara R."/>
            <person name="Takeuchi K."/>
            <person name="Arita M."/>
            <person name="Imose N."/>
            <person name="Musashino K."/>
            <person name="Yuuki H."/>
            <person name="Oshima A."/>
            <person name="Sasaki N."/>
            <person name="Aotsuka S."/>
            <person name="Yoshikawa Y."/>
            <person name="Matsunawa H."/>
            <person name="Ichihara T."/>
            <person name="Shiohata N."/>
            <person name="Sano S."/>
            <person name="Moriya S."/>
            <person name="Momiyama H."/>
            <person name="Satoh N."/>
            <person name="Takami S."/>
            <person name="Terashima Y."/>
            <person name="Suzuki O."/>
            <person name="Nakagawa S."/>
            <person name="Senoh A."/>
            <person name="Mizoguchi H."/>
            <person name="Goto Y."/>
            <person name="Shimizu F."/>
            <person name="Wakebe H."/>
            <person name="Hishigaki H."/>
            <person name="Watanabe T."/>
            <person name="Sugiyama A."/>
            <person name="Takemoto M."/>
            <person name="Kawakami B."/>
            <person name="Yamazaki M."/>
            <person name="Watanabe K."/>
            <person name="Kumagai A."/>
            <person name="Itakura S."/>
            <person name="Fukuzumi Y."/>
            <person name="Fujimori Y."/>
            <person name="Komiyama M."/>
            <person name="Tashiro H."/>
            <person name="Tanigami A."/>
            <person name="Fujiwara T."/>
            <person name="Ono T."/>
            <person name="Yamada K."/>
            <person name="Fujii Y."/>
            <person name="Ozaki K."/>
            <person name="Hirao M."/>
            <person name="Ohmori Y."/>
            <person name="Kawabata A."/>
            <person name="Hikiji T."/>
            <person name="Kobatake N."/>
            <person name="Inagaki H."/>
            <person name="Ikema Y."/>
            <person name="Okamoto S."/>
            <person name="Okitani R."/>
            <person name="Kawakami T."/>
            <person name="Noguchi S."/>
            <person name="Itoh T."/>
            <person name="Shigeta K."/>
            <person name="Senba T."/>
            <person name="Matsumura K."/>
            <person name="Nakajima Y."/>
            <person name="Mizuno T."/>
            <person name="Morinaga M."/>
            <person name="Sasaki M."/>
            <person name="Togashi T."/>
            <person name="Oyama M."/>
            <person name="Hata H."/>
            <person name="Watanabe M."/>
            <person name="Komatsu T."/>
            <person name="Mizushima-Sugano J."/>
            <person name="Satoh T."/>
            <person name="Shirai Y."/>
            <person name="Takahashi Y."/>
            <person name="Nakagawa K."/>
            <person name="Okumura K."/>
            <person name="Nagase T."/>
            <person name="Nomura N."/>
            <person name="Kikuchi H."/>
            <person name="Masuho Y."/>
            <person name="Yamashita R."/>
            <person name="Nakai K."/>
            <person name="Yada T."/>
            <person name="Nakamura Y."/>
            <person name="Ohara O."/>
            <person name="Isogai T."/>
            <person name="Sugano S."/>
        </authorList>
    </citation>
    <scope>NUCLEOTIDE SEQUENCE [LARGE SCALE MRNA] (ISOFORM 1)</scope>
    <source>
        <tissue>Uterus</tissue>
    </source>
</reference>
<reference key="7">
    <citation type="journal article" date="2004" name="Nature">
        <title>The DNA sequence and comparative analysis of human chromosome 10.</title>
        <authorList>
            <person name="Deloukas P."/>
            <person name="Earthrowl M.E."/>
            <person name="Grafham D.V."/>
            <person name="Rubenfield M."/>
            <person name="French L."/>
            <person name="Steward C.A."/>
            <person name="Sims S.K."/>
            <person name="Jones M.C."/>
            <person name="Searle S."/>
            <person name="Scott C."/>
            <person name="Howe K."/>
            <person name="Hunt S.E."/>
            <person name="Andrews T.D."/>
            <person name="Gilbert J.G.R."/>
            <person name="Swarbreck D."/>
            <person name="Ashurst J.L."/>
            <person name="Taylor A."/>
            <person name="Battles J."/>
            <person name="Bird C.P."/>
            <person name="Ainscough R."/>
            <person name="Almeida J.P."/>
            <person name="Ashwell R.I.S."/>
            <person name="Ambrose K.D."/>
            <person name="Babbage A.K."/>
            <person name="Bagguley C.L."/>
            <person name="Bailey J."/>
            <person name="Banerjee R."/>
            <person name="Bates K."/>
            <person name="Beasley H."/>
            <person name="Bray-Allen S."/>
            <person name="Brown A.J."/>
            <person name="Brown J.Y."/>
            <person name="Burford D.C."/>
            <person name="Burrill W."/>
            <person name="Burton J."/>
            <person name="Cahill P."/>
            <person name="Camire D."/>
            <person name="Carter N.P."/>
            <person name="Chapman J.C."/>
            <person name="Clark S.Y."/>
            <person name="Clarke G."/>
            <person name="Clee C.M."/>
            <person name="Clegg S."/>
            <person name="Corby N."/>
            <person name="Coulson A."/>
            <person name="Dhami P."/>
            <person name="Dutta I."/>
            <person name="Dunn M."/>
            <person name="Faulkner L."/>
            <person name="Frankish A."/>
            <person name="Frankland J.A."/>
            <person name="Garner P."/>
            <person name="Garnett J."/>
            <person name="Gribble S."/>
            <person name="Griffiths C."/>
            <person name="Grocock R."/>
            <person name="Gustafson E."/>
            <person name="Hammond S."/>
            <person name="Harley J.L."/>
            <person name="Hart E."/>
            <person name="Heath P.D."/>
            <person name="Ho T.P."/>
            <person name="Hopkins B."/>
            <person name="Horne J."/>
            <person name="Howden P.J."/>
            <person name="Huckle E."/>
            <person name="Hynds C."/>
            <person name="Johnson C."/>
            <person name="Johnson D."/>
            <person name="Kana A."/>
            <person name="Kay M."/>
            <person name="Kimberley A.M."/>
            <person name="Kershaw J.K."/>
            <person name="Kokkinaki M."/>
            <person name="Laird G.K."/>
            <person name="Lawlor S."/>
            <person name="Lee H.M."/>
            <person name="Leongamornlert D.A."/>
            <person name="Laird G."/>
            <person name="Lloyd C."/>
            <person name="Lloyd D.M."/>
            <person name="Loveland J."/>
            <person name="Lovell J."/>
            <person name="McLaren S."/>
            <person name="McLay K.E."/>
            <person name="McMurray A."/>
            <person name="Mashreghi-Mohammadi M."/>
            <person name="Matthews L."/>
            <person name="Milne S."/>
            <person name="Nickerson T."/>
            <person name="Nguyen M."/>
            <person name="Overton-Larty E."/>
            <person name="Palmer S.A."/>
            <person name="Pearce A.V."/>
            <person name="Peck A.I."/>
            <person name="Pelan S."/>
            <person name="Phillimore B."/>
            <person name="Porter K."/>
            <person name="Rice C.M."/>
            <person name="Rogosin A."/>
            <person name="Ross M.T."/>
            <person name="Sarafidou T."/>
            <person name="Sehra H.K."/>
            <person name="Shownkeen R."/>
            <person name="Skuce C.D."/>
            <person name="Smith M."/>
            <person name="Standring L."/>
            <person name="Sycamore N."/>
            <person name="Tester J."/>
            <person name="Thorpe A."/>
            <person name="Torcasso W."/>
            <person name="Tracey A."/>
            <person name="Tromans A."/>
            <person name="Tsolas J."/>
            <person name="Wall M."/>
            <person name="Walsh J."/>
            <person name="Wang H."/>
            <person name="Weinstock K."/>
            <person name="West A.P."/>
            <person name="Willey D.L."/>
            <person name="Whitehead S.L."/>
            <person name="Wilming L."/>
            <person name="Wray P.W."/>
            <person name="Young L."/>
            <person name="Chen Y."/>
            <person name="Lovering R.C."/>
            <person name="Moschonas N.K."/>
            <person name="Siebert R."/>
            <person name="Fechtel K."/>
            <person name="Bentley D."/>
            <person name="Durbin R.M."/>
            <person name="Hubbard T."/>
            <person name="Doucette-Stamm L."/>
            <person name="Beck S."/>
            <person name="Smith D.R."/>
            <person name="Rogers J."/>
        </authorList>
    </citation>
    <scope>NUCLEOTIDE SEQUENCE [LARGE SCALE GENOMIC DNA]</scope>
</reference>
<reference key="8">
    <citation type="submission" date="2005-09" db="EMBL/GenBank/DDBJ databases">
        <authorList>
            <person name="Mural R.J."/>
            <person name="Istrail S."/>
            <person name="Sutton G.G."/>
            <person name="Florea L."/>
            <person name="Halpern A.L."/>
            <person name="Mobarry C.M."/>
            <person name="Lippert R."/>
            <person name="Walenz B."/>
            <person name="Shatkay H."/>
            <person name="Dew I."/>
            <person name="Miller J.R."/>
            <person name="Flanigan M.J."/>
            <person name="Edwards N.J."/>
            <person name="Bolanos R."/>
            <person name="Fasulo D."/>
            <person name="Halldorsson B.V."/>
            <person name="Hannenhalli S."/>
            <person name="Turner R."/>
            <person name="Yooseph S."/>
            <person name="Lu F."/>
            <person name="Nusskern D.R."/>
            <person name="Shue B.C."/>
            <person name="Zheng X.H."/>
            <person name="Zhong F."/>
            <person name="Delcher A.L."/>
            <person name="Huson D.H."/>
            <person name="Kravitz S.A."/>
            <person name="Mouchard L."/>
            <person name="Reinert K."/>
            <person name="Remington K.A."/>
            <person name="Clark A.G."/>
            <person name="Waterman M.S."/>
            <person name="Eichler E.E."/>
            <person name="Adams M.D."/>
            <person name="Hunkapiller M.W."/>
            <person name="Myers E.W."/>
            <person name="Venter J.C."/>
        </authorList>
    </citation>
    <scope>NUCLEOTIDE SEQUENCE [LARGE SCALE GENOMIC DNA]</scope>
</reference>
<reference key="9">
    <citation type="journal article" date="2004" name="Genome Res.">
        <title>The status, quality, and expansion of the NIH full-length cDNA project: the Mammalian Gene Collection (MGC).</title>
        <authorList>
            <consortium name="The MGC Project Team"/>
        </authorList>
    </citation>
    <scope>NUCLEOTIDE SEQUENCE [LARGE SCALE MRNA] (ISOFORMS 1 AND 2)</scope>
</reference>
<reference key="10">
    <citation type="journal article" date="1995" name="J. Mol. Neurosci.">
        <title>Reserpine- and tetrabenazine-sensitive transport of (3)H-histamine by the neuronal isoform of the vesicular monoamine transporter.</title>
        <authorList>
            <person name="Erickson J.D."/>
            <person name="Eiden L.E."/>
            <person name="Schafer M.K."/>
            <person name="Weihe E."/>
        </authorList>
    </citation>
    <scope>FUNCTION</scope>
    <scope>TRANSPORT ACTIVITY</scope>
    <scope>ACTIVITY REGULATION</scope>
    <scope>TISSUE SPECIFICITY</scope>
</reference>
<reference key="11">
    <citation type="journal article" date="1996" name="Proc. Natl. Acad. Sci. U.S.A.">
        <title>Distinct pharmacological properties and distribution in neurons and endocrine cells of two isoforms of the human vesicular monoamine transporter.</title>
        <authorList>
            <person name="Erickson J.D."/>
            <person name="Schaefer M.K.-H."/>
            <person name="Bonner T.I."/>
            <person name="Eiden L.E."/>
            <person name="Weihe E."/>
        </authorList>
    </citation>
    <scope>FUNCTION</scope>
    <scope>TRANSPORT ACTIVITY</scope>
    <scope>BIOPHYSICOCHEMICAL PROPERTIES</scope>
    <scope>ACTIVITY REGULATION</scope>
    <scope>TISSUE SPECIFICITY</scope>
</reference>
<reference key="12">
    <citation type="journal article" date="2002" name="Biochemistry">
        <title>Identification of human vesicle monoamine transporter (VMAT2) lumenal cysteines that form an intramolecular disulfide bond.</title>
        <authorList>
            <person name="Thiriot D.S."/>
            <person name="Sievert M.K."/>
            <person name="Ruoho A.E."/>
        </authorList>
    </citation>
    <scope>DISULFIDE BOND</scope>
</reference>
<reference key="13">
    <citation type="journal article" date="2008" name="J. Proteome Res.">
        <title>Phosphoproteome of resting human platelets.</title>
        <authorList>
            <person name="Zahedi R.P."/>
            <person name="Lewandrowski U."/>
            <person name="Wiesner J."/>
            <person name="Wortelkamp S."/>
            <person name="Moebius J."/>
            <person name="Schuetz C."/>
            <person name="Walter U."/>
            <person name="Gambaryan S."/>
            <person name="Sickmann A."/>
        </authorList>
    </citation>
    <scope>IDENTIFICATION BY MASS SPECTROMETRY [LARGE SCALE ANALYSIS]</scope>
    <source>
        <tissue>Platelet</tissue>
    </source>
</reference>
<reference key="14">
    <citation type="journal article" date="2013" name="N. Engl. J. Med.">
        <title>Brain dopamine-serotonin vesicular transport disease and its treatment.</title>
        <authorList>
            <person name="Rilstone J.J."/>
            <person name="Alkhater R.A."/>
            <person name="Minassian B.A."/>
        </authorList>
    </citation>
    <scope>INVOLVEMENT IN PKDYS2</scope>
    <scope>VARIANT PKDYS2 LEU-387</scope>
    <scope>FUNCTION</scope>
    <scope>TRANSPORT ACTIVITY</scope>
    <scope>BIOPHYSICOCHEMICAL PROPERTIES</scope>
    <scope>CHARACTERIZATION OF VARIANT PKDYS2 LEU-387</scope>
</reference>
<reference evidence="23 24 25" key="15">
    <citation type="journal article" date="2023" name="Nature">
        <title>Mechanisms of neurotransmitter transport and drug inhibition in human VMAT2.</title>
        <authorList>
            <person name="Pidathala S."/>
            <person name="Liao S."/>
            <person name="Dai Y."/>
            <person name="Li X."/>
            <person name="Long C."/>
            <person name="Chang C.L."/>
            <person name="Zhang Z."/>
            <person name="Lee C.H."/>
        </authorList>
    </citation>
    <scope>STRUCTURE BY ELECTRON MICROSCOPY (2.89 ANGSTROMS) OF 19-514 OF WILD-TYPE AND MUTANT SER-418 IN COMPLEX WITH TETRABENAZINE; SEROTONIN AND RESERPINE</scope>
    <scope>FUNCTION</scope>
    <scope>CATALYTIC ACTIVITY</scope>
    <scope>ACTIVITY REGULATION</scope>
    <scope>INTERACTION WITH SEROTONIN</scope>
    <scope>MUTAGENESIS OF ASP-33; ASN-34; LEU-37; THR-38; VAL-41; PRO-45; PHE-135; LYS-138; ARG-189; SER-196; MET-204; ASP-214; ARG-217; MET-221; LEU-225; VAL-232; ILE-308; GLU-312; PRO-313; PRO-316; TRP-318; PHE-334; SER-338; TYR-341; ARG-357; ILE-395; ASP-399; MET-403; ASP-411; TYR-418; TYR-422; ASP-426; PHE-429 AND TYR-433</scope>
</reference>
<reference evidence="26" key="16">
    <citation type="journal article" date="2024" name="Elife">
        <title>Structural mechanisms for VMAT2 inhibition by tetrabenazine.</title>
        <authorList>
            <person name="Dalton M.P."/>
            <person name="Cheng M.H."/>
            <person name="Bahar I."/>
            <person name="Coleman J.A."/>
        </authorList>
    </citation>
    <scope>STRUCTURE BY ELECTRON MICROSCOPY (3.12 ANGSTROMS) OF 12-483 IN COMPLEX WITH TETRABENAZINE</scope>
    <scope>FUNCTION</scope>
    <scope>CATALYTIC ACTIVITY</scope>
    <scope>ACTIVITY REGULATION</scope>
    <scope>MUTAGENESIS OF ASN-34; LEU-37; GLU-127; PHE-135; LYS-138; ARG-189; VAL-232; GLU-312; TRP-318; PHE-429 AND TYR-433</scope>
</reference>
<reference evidence="19 20 21 22" key="17">
    <citation type="journal article" date="2024" name="Nature">
        <title>Transport and inhibition mechanisms of human VMAT2.</title>
        <authorList>
            <person name="Wu D."/>
            <person name="Chen Q."/>
            <person name="Yu Z."/>
            <person name="Huang B."/>
            <person name="Zhao J."/>
            <person name="Wang Y."/>
            <person name="Su J."/>
            <person name="Zhou F."/>
            <person name="Yan R."/>
            <person name="Li N."/>
            <person name="Zhao Y."/>
            <person name="Jiang D."/>
        </authorList>
    </citation>
    <scope>STRUCTURE BY ELECTRON MICROSCOPY (2.84 ANGSTROMS) OF 18-474 IN COMPLEX WITH TETRABENAZINE; SEROTONIN; KETANSERIN AND RESERPINE</scope>
    <scope>FUNCTION</scope>
    <scope>CATALYTIC ACTIVITY</scope>
    <scope>ACTIVITY REGULATION</scope>
    <scope>INTERACTION WITH SEROTONIN</scope>
    <scope>MUTAGENESIS OF ASP-33; LEU-37; ARG-189; ASP-214; ARG-217; LEU-228; VAL-232; GLU-244; ASN-305; ILE-308; GLU-312; SER-338; ILE-339; TYR-341; ARG-357; ASP-411; ASP-426 AND TYR-433</scope>
</reference>
<sequence>MALSELALVRWLQESRRSRKLILFIVFLALLLDNMLLTVVVPIIPSYLYSIKHEKNATEIQTARPVHTASISDSFQSIFSYYDNSTMVTGNATRDLTLHQTATQHMVTNASAVPSDCPSEDKDLLNENVQVGLLFASKATVQLITNPFIGLLTNRIGYPIPIFAGFCIMFVSTIMFAFSSSYAFLLIARSLQGIGSSCSSVAGMGMLASVYTDDEERGNVMGIALGGLAMGVLVGPPFGSVLYEFVGKTAPFLVLAALVLLDGAIQLFVLQPSRVQPESQKGTPLTTLLKDPYILIAAGSICFANMGIAMLEPALPIWMMETMCSRKWQLGVAFLPASISYLIGTNIFGILAHKMGRWLCALLGMIIVGVSILCIPFAKNIYGLIAPNFGVGFAIGMVDSSMMPIMGYLVDLRHVSVYGSVYAIADVAFCMGYAIGPSAGGAIAKAIGFPWLMTIIGIIDILFAPLCFFLRSPPAKEEKMAILMDHNCPIKTKMYTQNNIQSYPIGEDEESESD</sequence>
<gene>
    <name type="primary">SLC18A2</name>
    <name type="synonym">SVMT</name>
    <name type="synonym">VMAT2</name>
</gene>
<proteinExistence type="evidence at protein level"/>